<reference key="1">
    <citation type="journal article" date="2008" name="J. Bacteriol.">
        <title>Genome sequence of the streptomycin-producing microorganism Streptomyces griseus IFO 13350.</title>
        <authorList>
            <person name="Ohnishi Y."/>
            <person name="Ishikawa J."/>
            <person name="Hara H."/>
            <person name="Suzuki H."/>
            <person name="Ikenoya M."/>
            <person name="Ikeda H."/>
            <person name="Yamashita A."/>
            <person name="Hattori M."/>
            <person name="Horinouchi S."/>
        </authorList>
    </citation>
    <scope>NUCLEOTIDE SEQUENCE [LARGE SCALE GENOMIC DNA]</scope>
    <source>
        <strain>JCM 4626 / CBS 651.72 / NBRC 13350 / KCC S-0626 / ISP 5235</strain>
    </source>
</reference>
<protein>
    <recommendedName>
        <fullName evidence="1">Small ribosomal subunit protein uS15</fullName>
    </recommendedName>
    <alternativeName>
        <fullName evidence="2">30S ribosomal protein S15</fullName>
    </alternativeName>
</protein>
<sequence length="96" mass="10881">MPLDAATKKQIMSEFAQKEGDTGSPEVQVAMLSRRISDLTEHLKTHKHDHHSRRGLLILVGQRRRLLQYLAKKDIQRFRALVDRLGIRRGAAGGAK</sequence>
<organism>
    <name type="scientific">Streptomyces griseus subsp. griseus (strain JCM 4626 / CBS 651.72 / NBRC 13350 / KCC S-0626 / ISP 5235)</name>
    <dbReference type="NCBI Taxonomy" id="455632"/>
    <lineage>
        <taxon>Bacteria</taxon>
        <taxon>Bacillati</taxon>
        <taxon>Actinomycetota</taxon>
        <taxon>Actinomycetes</taxon>
        <taxon>Kitasatosporales</taxon>
        <taxon>Streptomycetaceae</taxon>
        <taxon>Streptomyces</taxon>
    </lineage>
</organism>
<feature type="chain" id="PRO_1000143174" description="Small ribosomal subunit protein uS15">
    <location>
        <begin position="1"/>
        <end position="96"/>
    </location>
</feature>
<proteinExistence type="inferred from homology"/>
<accession>B1VXZ7</accession>
<evidence type="ECO:0000255" key="1">
    <source>
        <dbReference type="HAMAP-Rule" id="MF_01343"/>
    </source>
</evidence>
<evidence type="ECO:0000305" key="2"/>
<gene>
    <name evidence="1" type="primary">rpsO</name>
    <name type="ordered locus">SGR_1784</name>
</gene>
<keyword id="KW-0687">Ribonucleoprotein</keyword>
<keyword id="KW-0689">Ribosomal protein</keyword>
<keyword id="KW-0694">RNA-binding</keyword>
<keyword id="KW-0699">rRNA-binding</keyword>
<dbReference type="EMBL" id="AP009493">
    <property type="protein sequence ID" value="BAG18613.1"/>
    <property type="molecule type" value="Genomic_DNA"/>
</dbReference>
<dbReference type="RefSeq" id="WP_003965855.1">
    <property type="nucleotide sequence ID" value="NC_010572.1"/>
</dbReference>
<dbReference type="SMR" id="B1VXZ7"/>
<dbReference type="GeneID" id="97345197"/>
<dbReference type="KEGG" id="sgr:SGR_1784"/>
<dbReference type="eggNOG" id="COG0184">
    <property type="taxonomic scope" value="Bacteria"/>
</dbReference>
<dbReference type="HOGENOM" id="CLU_148518_0_0_11"/>
<dbReference type="Proteomes" id="UP000001685">
    <property type="component" value="Chromosome"/>
</dbReference>
<dbReference type="GO" id="GO:0022627">
    <property type="term" value="C:cytosolic small ribosomal subunit"/>
    <property type="evidence" value="ECO:0007669"/>
    <property type="project" value="TreeGrafter"/>
</dbReference>
<dbReference type="GO" id="GO:0019843">
    <property type="term" value="F:rRNA binding"/>
    <property type="evidence" value="ECO:0007669"/>
    <property type="project" value="UniProtKB-UniRule"/>
</dbReference>
<dbReference type="GO" id="GO:0003735">
    <property type="term" value="F:structural constituent of ribosome"/>
    <property type="evidence" value="ECO:0007669"/>
    <property type="project" value="InterPro"/>
</dbReference>
<dbReference type="GO" id="GO:0006412">
    <property type="term" value="P:translation"/>
    <property type="evidence" value="ECO:0007669"/>
    <property type="project" value="UniProtKB-UniRule"/>
</dbReference>
<dbReference type="CDD" id="cd00353">
    <property type="entry name" value="Ribosomal_S15p_S13e"/>
    <property type="match status" value="1"/>
</dbReference>
<dbReference type="FunFam" id="1.10.287.10:FF:000002">
    <property type="entry name" value="30S ribosomal protein S15"/>
    <property type="match status" value="1"/>
</dbReference>
<dbReference type="Gene3D" id="6.10.250.3130">
    <property type="match status" value="1"/>
</dbReference>
<dbReference type="Gene3D" id="1.10.287.10">
    <property type="entry name" value="S15/NS1, RNA-binding"/>
    <property type="match status" value="1"/>
</dbReference>
<dbReference type="HAMAP" id="MF_01343_B">
    <property type="entry name" value="Ribosomal_uS15_B"/>
    <property type="match status" value="1"/>
</dbReference>
<dbReference type="InterPro" id="IPR000589">
    <property type="entry name" value="Ribosomal_uS15"/>
</dbReference>
<dbReference type="InterPro" id="IPR005290">
    <property type="entry name" value="Ribosomal_uS15_bac-type"/>
</dbReference>
<dbReference type="InterPro" id="IPR009068">
    <property type="entry name" value="uS15_NS1_RNA-bd_sf"/>
</dbReference>
<dbReference type="NCBIfam" id="TIGR00952">
    <property type="entry name" value="S15_bact"/>
    <property type="match status" value="1"/>
</dbReference>
<dbReference type="PANTHER" id="PTHR23321">
    <property type="entry name" value="RIBOSOMAL PROTEIN S15, BACTERIAL AND ORGANELLAR"/>
    <property type="match status" value="1"/>
</dbReference>
<dbReference type="PANTHER" id="PTHR23321:SF26">
    <property type="entry name" value="SMALL RIBOSOMAL SUBUNIT PROTEIN US15M"/>
    <property type="match status" value="1"/>
</dbReference>
<dbReference type="Pfam" id="PF00312">
    <property type="entry name" value="Ribosomal_S15"/>
    <property type="match status" value="1"/>
</dbReference>
<dbReference type="SMART" id="SM01387">
    <property type="entry name" value="Ribosomal_S15"/>
    <property type="match status" value="1"/>
</dbReference>
<dbReference type="SUPFAM" id="SSF47060">
    <property type="entry name" value="S15/NS1 RNA-binding domain"/>
    <property type="match status" value="1"/>
</dbReference>
<dbReference type="PROSITE" id="PS00362">
    <property type="entry name" value="RIBOSOMAL_S15"/>
    <property type="match status" value="1"/>
</dbReference>
<name>RS15_STRGG</name>
<comment type="function">
    <text evidence="1">One of the primary rRNA binding proteins, it binds directly to 16S rRNA where it helps nucleate assembly of the platform of the 30S subunit by binding and bridging several RNA helices of the 16S rRNA.</text>
</comment>
<comment type="function">
    <text evidence="1">Forms an intersubunit bridge (bridge B4) with the 23S rRNA of the 50S subunit in the ribosome.</text>
</comment>
<comment type="subunit">
    <text evidence="1">Part of the 30S ribosomal subunit. Forms a bridge to the 50S subunit in the 70S ribosome, contacting the 23S rRNA.</text>
</comment>
<comment type="similarity">
    <text evidence="1">Belongs to the universal ribosomal protein uS15 family.</text>
</comment>